<evidence type="ECO:0000255" key="1">
    <source>
        <dbReference type="HAMAP-Rule" id="MF_01310"/>
    </source>
</evidence>
<evidence type="ECO:0000256" key="2">
    <source>
        <dbReference type="SAM" id="MobiDB-lite"/>
    </source>
</evidence>
<evidence type="ECO:0000305" key="3"/>
<protein>
    <recommendedName>
        <fullName evidence="1">Small ribosomal subunit protein uS11</fullName>
    </recommendedName>
    <alternativeName>
        <fullName evidence="3">30S ribosomal protein S11</fullName>
    </alternativeName>
</protein>
<name>RS11_SACEN</name>
<keyword id="KW-1185">Reference proteome</keyword>
<keyword id="KW-0687">Ribonucleoprotein</keyword>
<keyword id="KW-0689">Ribosomal protein</keyword>
<keyword id="KW-0694">RNA-binding</keyword>
<keyword id="KW-0699">rRNA-binding</keyword>
<proteinExistence type="inferred from homology"/>
<dbReference type="EMBL" id="AM420293">
    <property type="protein sequence ID" value="CAM05969.1"/>
    <property type="molecule type" value="Genomic_DNA"/>
</dbReference>
<dbReference type="RefSeq" id="WP_009948668.1">
    <property type="nucleotide sequence ID" value="NZ_PDBV01000001.1"/>
</dbReference>
<dbReference type="SMR" id="A4FPJ4"/>
<dbReference type="STRING" id="405948.SACE_6805"/>
<dbReference type="KEGG" id="sen:SACE_6805"/>
<dbReference type="eggNOG" id="COG0100">
    <property type="taxonomic scope" value="Bacteria"/>
</dbReference>
<dbReference type="HOGENOM" id="CLU_072439_5_0_11"/>
<dbReference type="OrthoDB" id="9806415at2"/>
<dbReference type="Proteomes" id="UP000006728">
    <property type="component" value="Chromosome"/>
</dbReference>
<dbReference type="GO" id="GO:1990904">
    <property type="term" value="C:ribonucleoprotein complex"/>
    <property type="evidence" value="ECO:0007669"/>
    <property type="project" value="UniProtKB-KW"/>
</dbReference>
<dbReference type="GO" id="GO:0005840">
    <property type="term" value="C:ribosome"/>
    <property type="evidence" value="ECO:0007669"/>
    <property type="project" value="UniProtKB-KW"/>
</dbReference>
<dbReference type="GO" id="GO:0019843">
    <property type="term" value="F:rRNA binding"/>
    <property type="evidence" value="ECO:0007669"/>
    <property type="project" value="UniProtKB-UniRule"/>
</dbReference>
<dbReference type="GO" id="GO:0003735">
    <property type="term" value="F:structural constituent of ribosome"/>
    <property type="evidence" value="ECO:0007669"/>
    <property type="project" value="InterPro"/>
</dbReference>
<dbReference type="GO" id="GO:0006412">
    <property type="term" value="P:translation"/>
    <property type="evidence" value="ECO:0007669"/>
    <property type="project" value="UniProtKB-UniRule"/>
</dbReference>
<dbReference type="FunFam" id="3.30.420.80:FF:000001">
    <property type="entry name" value="30S ribosomal protein S11"/>
    <property type="match status" value="1"/>
</dbReference>
<dbReference type="Gene3D" id="3.30.420.80">
    <property type="entry name" value="Ribosomal protein S11"/>
    <property type="match status" value="1"/>
</dbReference>
<dbReference type="HAMAP" id="MF_01310">
    <property type="entry name" value="Ribosomal_uS11"/>
    <property type="match status" value="1"/>
</dbReference>
<dbReference type="InterPro" id="IPR001971">
    <property type="entry name" value="Ribosomal_uS11"/>
</dbReference>
<dbReference type="InterPro" id="IPR019981">
    <property type="entry name" value="Ribosomal_uS11_bac-type"/>
</dbReference>
<dbReference type="InterPro" id="IPR018102">
    <property type="entry name" value="Ribosomal_uS11_CS"/>
</dbReference>
<dbReference type="InterPro" id="IPR036967">
    <property type="entry name" value="Ribosomal_uS11_sf"/>
</dbReference>
<dbReference type="NCBIfam" id="NF003698">
    <property type="entry name" value="PRK05309.1"/>
    <property type="match status" value="1"/>
</dbReference>
<dbReference type="NCBIfam" id="TIGR03632">
    <property type="entry name" value="uS11_bact"/>
    <property type="match status" value="1"/>
</dbReference>
<dbReference type="PANTHER" id="PTHR11759">
    <property type="entry name" value="40S RIBOSOMAL PROTEIN S14/30S RIBOSOMAL PROTEIN S11"/>
    <property type="match status" value="1"/>
</dbReference>
<dbReference type="Pfam" id="PF00411">
    <property type="entry name" value="Ribosomal_S11"/>
    <property type="match status" value="1"/>
</dbReference>
<dbReference type="PIRSF" id="PIRSF002131">
    <property type="entry name" value="Ribosomal_S11"/>
    <property type="match status" value="1"/>
</dbReference>
<dbReference type="SUPFAM" id="SSF53137">
    <property type="entry name" value="Translational machinery components"/>
    <property type="match status" value="1"/>
</dbReference>
<dbReference type="PROSITE" id="PS00054">
    <property type="entry name" value="RIBOSOMAL_S11"/>
    <property type="match status" value="1"/>
</dbReference>
<feature type="chain" id="PRO_0000294846" description="Small ribosomal subunit protein uS11">
    <location>
        <begin position="1"/>
        <end position="134"/>
    </location>
</feature>
<feature type="region of interest" description="Disordered" evidence="2">
    <location>
        <begin position="1"/>
        <end position="24"/>
    </location>
</feature>
<feature type="region of interest" description="Disordered" evidence="2">
    <location>
        <begin position="115"/>
        <end position="134"/>
    </location>
</feature>
<feature type="compositionally biased region" description="Basic residues" evidence="2">
    <location>
        <begin position="9"/>
        <end position="18"/>
    </location>
</feature>
<comment type="function">
    <text evidence="1">Located on the platform of the 30S subunit, it bridges several disparate RNA helices of the 16S rRNA. Forms part of the Shine-Dalgarno cleft in the 70S ribosome.</text>
</comment>
<comment type="subunit">
    <text evidence="1">Part of the 30S ribosomal subunit. Interacts with proteins S7 and S18. Binds to IF-3.</text>
</comment>
<comment type="similarity">
    <text evidence="1">Belongs to the universal ribosomal protein uS11 family.</text>
</comment>
<organism>
    <name type="scientific">Saccharopolyspora erythraea (strain ATCC 11635 / DSM 40517 / JCM 4748 / NBRC 13426 / NCIMB 8594 / NRRL 2338)</name>
    <dbReference type="NCBI Taxonomy" id="405948"/>
    <lineage>
        <taxon>Bacteria</taxon>
        <taxon>Bacillati</taxon>
        <taxon>Actinomycetota</taxon>
        <taxon>Actinomycetes</taxon>
        <taxon>Pseudonocardiales</taxon>
        <taxon>Pseudonocardiaceae</taxon>
        <taxon>Saccharopolyspora</taxon>
    </lineage>
</organism>
<sequence length="134" mass="14272">MPPKSRAGAVKKVRRKEKKNVAHGQAHIKSTFNNTIVSITDPTGAVISWASAGHVGFKGSRKSTPFAAQMAAENAARKAAEHGMKKVDVFVKGPGSGRETAIRSLQAAGLEVGTIQDVTPQPHNGCRPPKRRRV</sequence>
<accession>A4FPJ4</accession>
<gene>
    <name evidence="1" type="primary">rpsK</name>
    <name type="ordered locus">SACE_6805</name>
</gene>
<reference key="1">
    <citation type="journal article" date="2007" name="Nat. Biotechnol.">
        <title>Complete genome sequence of the erythromycin-producing bacterium Saccharopolyspora erythraea NRRL23338.</title>
        <authorList>
            <person name="Oliynyk M."/>
            <person name="Samborskyy M."/>
            <person name="Lester J.B."/>
            <person name="Mironenko T."/>
            <person name="Scott N."/>
            <person name="Dickens S."/>
            <person name="Haydock S.F."/>
            <person name="Leadlay P.F."/>
        </authorList>
    </citation>
    <scope>NUCLEOTIDE SEQUENCE [LARGE SCALE GENOMIC DNA]</scope>
    <source>
        <strain>ATCC 11635 / DSM 40517 / JCM 4748 / NBRC 13426 / NCIMB 8594 / NRRL 2338</strain>
    </source>
</reference>